<evidence type="ECO:0000250" key="1">
    <source>
        <dbReference type="UniProtKB" id="P61009"/>
    </source>
</evidence>
<evidence type="ECO:0000250" key="2">
    <source>
        <dbReference type="UniProtKB" id="Q12133"/>
    </source>
</evidence>
<evidence type="ECO:0000255" key="3"/>
<evidence type="ECO:0000269" key="4">
    <source>
    </source>
</evidence>
<evidence type="ECO:0000269" key="5">
    <source>
    </source>
</evidence>
<evidence type="ECO:0000305" key="6"/>
<evidence type="ECO:0000305" key="7">
    <source>
    </source>
</evidence>
<gene>
    <name type="primary">SPCS3</name>
    <name type="synonym">SPC22</name>
</gene>
<comment type="function">
    <text evidence="2 4 5">Essential component of the signal peptidase complex (SPC) which catalyzes the cleavage of N-terminal signal sequences from nascent proteins as they are translocated into the lumen of the endoplasmic reticulum (PubMed:3511473, PubMed:8444896). Essential for the SPC catalytic activity, possibly by stabilizing and positioning the active center of the complex close to the lumenal surface (By similarity).</text>
</comment>
<comment type="subunit">
    <text evidence="1 4">Component of the signal peptidase complex paralog A (SPC-A) composed of a catalytic subunit SEC11A and three accessory subunits SPCS1, SPCS2 and SPCS3 (PubMed:3511473). Component of the signal peptidase complex paralog C (SPC-C) composed of a catalytic subunit SEC11C and three accessory subunits SPCS1, SPCS2 and SPCS3 (PubMed:3511473). Within the complex, interacts with SEC11A or SEC11C and SPCS1 (By similarity). The complex induces a local thinning of the ER membrane which is used to measure the length of the signal peptide (SP) h-region of protein substrates (By similarity). This ensures the selectivity of the complex towards h-regions shorter than 18-20 amino acids (By similarity).</text>
</comment>
<comment type="subcellular location">
    <subcellularLocation>
        <location evidence="4 5">Endoplasmic reticulum membrane</location>
        <topology evidence="5">Single-pass type II membrane protein</topology>
    </subcellularLocation>
</comment>
<comment type="PTM">
    <text evidence="4 5">Occurs in 2 differentially glycosylated forms (22 kDa and 23 kDa).</text>
</comment>
<comment type="similarity">
    <text evidence="6">Belongs to the SPCS3 family.</text>
</comment>
<keyword id="KW-0903">Direct protein sequencing</keyword>
<keyword id="KW-0256">Endoplasmic reticulum</keyword>
<keyword id="KW-0325">Glycoprotein</keyword>
<keyword id="KW-0472">Membrane</keyword>
<keyword id="KW-1185">Reference proteome</keyword>
<keyword id="KW-0735">Signal-anchor</keyword>
<keyword id="KW-0812">Transmembrane</keyword>
<keyword id="KW-1133">Transmembrane helix</keyword>
<sequence length="180" mass="20313">MNTVLSRANSLFAFSLSVMAALTFGCFITTAFKDRSVPVRLHVSRIMLKNVEDFTGPRERSDLGFITFDITADLENIFDWNVKQLFLYLSAEYSTKNNALNQVVLWDKIVLRGDNPKLLLKDMKTKYFFFDDGNGLKGNRNVTLTLSWNVVPNAGILPLVTGSGHVSVPFPDTYEITKSY</sequence>
<accession>P61008</accession>
<accession>P12280</accession>
<accession>Q9H0S7</accession>
<organism>
    <name type="scientific">Canis lupus familiaris</name>
    <name type="common">Dog</name>
    <name type="synonym">Canis familiaris</name>
    <dbReference type="NCBI Taxonomy" id="9615"/>
    <lineage>
        <taxon>Eukaryota</taxon>
        <taxon>Metazoa</taxon>
        <taxon>Chordata</taxon>
        <taxon>Craniata</taxon>
        <taxon>Vertebrata</taxon>
        <taxon>Euteleostomi</taxon>
        <taxon>Mammalia</taxon>
        <taxon>Eutheria</taxon>
        <taxon>Laurasiatheria</taxon>
        <taxon>Carnivora</taxon>
        <taxon>Caniformia</taxon>
        <taxon>Canidae</taxon>
        <taxon>Canis</taxon>
    </lineage>
</organism>
<reference key="1">
    <citation type="journal article" date="1988" name="J. Biol. Chem.">
        <title>cDNA-derived primary structure of the glycoprotein component of canine microsomal signal peptidase complex.</title>
        <authorList>
            <person name="Shelness G.S."/>
            <person name="Kanwar Y.S."/>
            <person name="Blobel G."/>
        </authorList>
    </citation>
    <scope>NUCLEOTIDE SEQUENCE [MRNA]</scope>
    <scope>PARTIAL PROTEIN SEQUENCE</scope>
</reference>
<reference key="2">
    <citation type="journal article" date="1986" name="Proc. Natl. Acad. Sci. U.S.A.">
        <title>Purification of microsomal signal peptidase as a complex.</title>
        <authorList>
            <person name="Evans E.A."/>
            <person name="Gilmore R."/>
            <person name="Blobel G."/>
        </authorList>
    </citation>
    <scope>FUNCTION</scope>
    <scope>IDENTIFICATION IN THE SIGNAL PEPTIDASE COMPLEX</scope>
    <scope>SUBCELLULAR LOCATION</scope>
    <scope>GLYCOSYLATION AT ASN-141</scope>
</reference>
<reference key="3">
    <citation type="journal article" date="1993" name="J. Biol. Chem.">
        <title>Membrane topology and biogenesis of eukaryotic signal peptidase.</title>
        <authorList>
            <person name="Shelness G.S."/>
            <person name="Lin L."/>
            <person name="Nicchitta C.V."/>
        </authorList>
    </citation>
    <scope>FUNCTION</scope>
    <scope>SUBCELLULAR LOCATION</scope>
    <scope>TOPOLOGY</scope>
    <scope>GLYCOSYLATION AT ASN-141</scope>
</reference>
<name>SPCS3_CANLF</name>
<proteinExistence type="evidence at protein level"/>
<feature type="chain" id="PRO_0000218937" description="Signal peptidase complex subunit 3">
    <location>
        <begin position="1"/>
        <end position="180"/>
    </location>
</feature>
<feature type="topological domain" description="Cytoplasmic" evidence="5">
    <location>
        <begin position="1"/>
        <end position="11"/>
    </location>
</feature>
<feature type="transmembrane region" description="Helical; Signal-anchor for type II membrane protein" evidence="3">
    <location>
        <begin position="12"/>
        <end position="32"/>
    </location>
</feature>
<feature type="topological domain" description="Lumenal" evidence="5">
    <location>
        <begin position="33"/>
        <end position="180"/>
    </location>
</feature>
<feature type="glycosylation site" description="N-linked (GlcNAc...) asparagine" evidence="5 7">
    <location>
        <position position="141"/>
    </location>
</feature>
<feature type="sequence conflict" description="In Ref. 1; AA sequence." evidence="6" ref="1">
    <original>N</original>
    <variation>E</variation>
    <location>
        <position position="141"/>
    </location>
</feature>
<dbReference type="EMBL" id="J04067">
    <property type="protein sequence ID" value="AAA30894.1"/>
    <property type="molecule type" value="mRNA"/>
</dbReference>
<dbReference type="PIR" id="A31788">
    <property type="entry name" value="A31788"/>
</dbReference>
<dbReference type="RefSeq" id="NP_001003314.1">
    <property type="nucleotide sequence ID" value="NM_001003314.1"/>
</dbReference>
<dbReference type="RefSeq" id="XP_038308496.1">
    <property type="nucleotide sequence ID" value="XM_038452568.1"/>
</dbReference>
<dbReference type="RefSeq" id="XP_038416425.1">
    <property type="nucleotide sequence ID" value="XM_038560497.1"/>
</dbReference>
<dbReference type="RefSeq" id="XP_038546244.1">
    <property type="nucleotide sequence ID" value="XM_038690316.1"/>
</dbReference>
<dbReference type="SMR" id="P61008"/>
<dbReference type="CORUM" id="P61008"/>
<dbReference type="FunCoup" id="P61008">
    <property type="interactions" value="1456"/>
</dbReference>
<dbReference type="STRING" id="9615.ENSCAFP00000035192"/>
<dbReference type="MEROPS" id="X45.001"/>
<dbReference type="GlyCosmos" id="P61008">
    <property type="glycosylation" value="1 site, No reported glycans"/>
</dbReference>
<dbReference type="iPTMnet" id="P61008"/>
<dbReference type="PaxDb" id="9612-ENSCAFP00000035192"/>
<dbReference type="Ensembl" id="ENSCAFT00000039350.4">
    <property type="protein sequence ID" value="ENSCAFP00000035192.4"/>
    <property type="gene ID" value="ENSCAFG00000025347.4"/>
</dbReference>
<dbReference type="Ensembl" id="ENSCAFT00030018803.1">
    <property type="protein sequence ID" value="ENSCAFP00030016411.1"/>
    <property type="gene ID" value="ENSCAFG00030010127.1"/>
</dbReference>
<dbReference type="Ensembl" id="ENSCAFT00040011067.1">
    <property type="protein sequence ID" value="ENSCAFP00040009582.1"/>
    <property type="gene ID" value="ENSCAFG00040005914.1"/>
</dbReference>
<dbReference type="Ensembl" id="ENSCAFT00845033569.1">
    <property type="protein sequence ID" value="ENSCAFP00845026279.1"/>
    <property type="gene ID" value="ENSCAFG00845018970.1"/>
</dbReference>
<dbReference type="GeneID" id="404005"/>
<dbReference type="VEuPathDB" id="HostDB:ENSCAFG00845018970"/>
<dbReference type="VGNC" id="VGNC:82299">
    <property type="gene designation" value="SPCS3"/>
</dbReference>
<dbReference type="eggNOG" id="KOG3372">
    <property type="taxonomic scope" value="Eukaryota"/>
</dbReference>
<dbReference type="GeneTree" id="ENSGT00390000009223"/>
<dbReference type="InParanoid" id="P61008"/>
<dbReference type="OrthoDB" id="10261524at2759"/>
<dbReference type="Reactome" id="R-CFA-422085">
    <property type="pathway name" value="Synthesis, secretion, and deacylation of Ghrelin"/>
</dbReference>
<dbReference type="Proteomes" id="UP000002254">
    <property type="component" value="Chromosome 16"/>
</dbReference>
<dbReference type="Proteomes" id="UP000694429">
    <property type="component" value="Chromosome 16"/>
</dbReference>
<dbReference type="Proteomes" id="UP000694542">
    <property type="component" value="Chromosome 16"/>
</dbReference>
<dbReference type="Proteomes" id="UP000805418">
    <property type="component" value="Chromosome 16"/>
</dbReference>
<dbReference type="GO" id="GO:0005789">
    <property type="term" value="C:endoplasmic reticulum membrane"/>
    <property type="evidence" value="ECO:0000304"/>
    <property type="project" value="Reactome"/>
</dbReference>
<dbReference type="GO" id="GO:0005787">
    <property type="term" value="C:signal peptidase complex"/>
    <property type="evidence" value="ECO:0000314"/>
    <property type="project" value="UniProtKB"/>
</dbReference>
<dbReference type="GO" id="GO:0006465">
    <property type="term" value="P:signal peptide processing"/>
    <property type="evidence" value="ECO:0007669"/>
    <property type="project" value="Ensembl"/>
</dbReference>
<dbReference type="GO" id="GO:0019082">
    <property type="term" value="P:viral protein processing"/>
    <property type="evidence" value="ECO:0007669"/>
    <property type="project" value="Ensembl"/>
</dbReference>
<dbReference type="InterPro" id="IPR007653">
    <property type="entry name" value="SPC3"/>
</dbReference>
<dbReference type="PANTHER" id="PTHR12804">
    <property type="entry name" value="MICROSOMAL SIGNAL PEPTIDASE 23 KD SUBUNIT SPC22/23"/>
    <property type="match status" value="1"/>
</dbReference>
<dbReference type="PANTHER" id="PTHR12804:SF0">
    <property type="entry name" value="SIGNAL PEPTIDASE COMPLEX SUBUNIT 3"/>
    <property type="match status" value="1"/>
</dbReference>
<dbReference type="Pfam" id="PF04573">
    <property type="entry name" value="SPC22"/>
    <property type="match status" value="1"/>
</dbReference>
<dbReference type="PIRSF" id="PIRSF016089">
    <property type="entry name" value="SPC22"/>
    <property type="match status" value="1"/>
</dbReference>
<protein>
    <recommendedName>
        <fullName>Signal peptidase complex subunit 3</fullName>
    </recommendedName>
    <alternativeName>
        <fullName>Microsomal signal peptidase 22/23 kDa subunit</fullName>
        <shortName>SPC22/23</shortName>
        <shortName>SPase 22/23 kDa subunit</shortName>
    </alternativeName>
</protein>